<evidence type="ECO:0000250" key="1"/>
<evidence type="ECO:0000305" key="2"/>
<keyword id="KW-0507">mRNA processing</keyword>
<keyword id="KW-0508">mRNA splicing</keyword>
<keyword id="KW-0539">Nucleus</keyword>
<keyword id="KW-1185">Reference proteome</keyword>
<keyword id="KW-0747">Spliceosome</keyword>
<organism>
    <name type="scientific">Bos taurus</name>
    <name type="common">Bovine</name>
    <dbReference type="NCBI Taxonomy" id="9913"/>
    <lineage>
        <taxon>Eukaryota</taxon>
        <taxon>Metazoa</taxon>
        <taxon>Chordata</taxon>
        <taxon>Craniata</taxon>
        <taxon>Vertebrata</taxon>
        <taxon>Euteleostomi</taxon>
        <taxon>Mammalia</taxon>
        <taxon>Eutheria</taxon>
        <taxon>Laurasiatheria</taxon>
        <taxon>Artiodactyla</taxon>
        <taxon>Ruminantia</taxon>
        <taxon>Pecora</taxon>
        <taxon>Bovidae</taxon>
        <taxon>Bovinae</taxon>
        <taxon>Bos</taxon>
    </lineage>
</organism>
<accession>Q3ZBQ4</accession>
<sequence length="123" mass="14334">MVVQDPLLCDLPIQVTLEEVNSQIALEYGQAMTVRVCKMDGEVMPVVVVQNATVLDLKKAIQRYVQLRQEREGGIQHISWSYVWRTYHLTSAGEKLTEDRKKLRDYGIRNRDEVSFIKKLRQK</sequence>
<dbReference type="EMBL" id="BC103171">
    <property type="protein sequence ID" value="AAI03172.1"/>
    <property type="status" value="ALT_INIT"/>
    <property type="molecule type" value="mRNA"/>
</dbReference>
<dbReference type="RefSeq" id="NP_001160084.1">
    <property type="nucleotide sequence ID" value="NM_001166612.1"/>
</dbReference>
<dbReference type="SMR" id="Q3ZBQ4"/>
<dbReference type="FunCoup" id="Q3ZBQ4">
    <property type="interactions" value="1945"/>
</dbReference>
<dbReference type="STRING" id="9913.ENSBTAP00000026387"/>
<dbReference type="PaxDb" id="9913-ENSBTAP00000026387"/>
<dbReference type="GeneID" id="513526"/>
<dbReference type="KEGG" id="bta:513526"/>
<dbReference type="CTD" id="79622"/>
<dbReference type="VEuPathDB" id="HostDB:ENSBTAG00000019804"/>
<dbReference type="eggNOG" id="ENOG502RXSI">
    <property type="taxonomic scope" value="Eukaryota"/>
</dbReference>
<dbReference type="HOGENOM" id="CLU_094998_1_0_1"/>
<dbReference type="InParanoid" id="Q3ZBQ4"/>
<dbReference type="OMA" id="KHVWANF"/>
<dbReference type="OrthoDB" id="72819at2759"/>
<dbReference type="TreeFam" id="TF329506"/>
<dbReference type="Reactome" id="R-BTA-72165">
    <property type="pathway name" value="mRNA Splicing - Minor Pathway"/>
</dbReference>
<dbReference type="Proteomes" id="UP000009136">
    <property type="component" value="Chromosome 25"/>
</dbReference>
<dbReference type="Bgee" id="ENSBTAG00000019804">
    <property type="expression patterns" value="Expressed in oocyte and 105 other cell types or tissues"/>
</dbReference>
<dbReference type="GO" id="GO:0005689">
    <property type="term" value="C:U12-type spliceosomal complex"/>
    <property type="evidence" value="ECO:0000318"/>
    <property type="project" value="GO_Central"/>
</dbReference>
<dbReference type="GO" id="GO:0000398">
    <property type="term" value="P:mRNA splicing, via spliceosome"/>
    <property type="evidence" value="ECO:0007669"/>
    <property type="project" value="InterPro"/>
</dbReference>
<dbReference type="CDD" id="cd17058">
    <property type="entry name" value="Ubl_SNRNP25"/>
    <property type="match status" value="1"/>
</dbReference>
<dbReference type="FunFam" id="3.10.20.90:FF:000194">
    <property type="entry name" value="U11/U12 small nuclear ribonucleoprotein 25 kDa protein"/>
    <property type="match status" value="1"/>
</dbReference>
<dbReference type="Gene3D" id="3.10.20.90">
    <property type="entry name" value="Phosphatidylinositol 3-kinase Catalytic Subunit, Chain A, domain 1"/>
    <property type="match status" value="1"/>
</dbReference>
<dbReference type="InterPro" id="IPR039690">
    <property type="entry name" value="SNRNP25"/>
</dbReference>
<dbReference type="InterPro" id="IPR040610">
    <property type="entry name" value="SNRNP25_ubiquitin"/>
</dbReference>
<dbReference type="InterPro" id="IPR029071">
    <property type="entry name" value="Ubiquitin-like_domsf"/>
</dbReference>
<dbReference type="PANTHER" id="PTHR14942">
    <property type="entry name" value="U11/U12 SMALL NUCLEAR RIBONUCLEOPROTEIN 25 KDA PROTEIN"/>
    <property type="match status" value="1"/>
</dbReference>
<dbReference type="PANTHER" id="PTHR14942:SF0">
    <property type="entry name" value="U11_U12 SMALL NUCLEAR RIBONUCLEOPROTEIN 25 KDA PROTEIN"/>
    <property type="match status" value="1"/>
</dbReference>
<dbReference type="Pfam" id="PF18036">
    <property type="entry name" value="Ubiquitin_4"/>
    <property type="match status" value="1"/>
</dbReference>
<dbReference type="SUPFAM" id="SSF54236">
    <property type="entry name" value="Ubiquitin-like"/>
    <property type="match status" value="1"/>
</dbReference>
<name>SNR25_BOVIN</name>
<comment type="subunit">
    <text evidence="1">Component of the U11/U12 snRNPs that are part of the U12-type spliceosome.</text>
</comment>
<comment type="subcellular location">
    <subcellularLocation>
        <location evidence="1">Nucleus</location>
    </subcellularLocation>
</comment>
<comment type="sequence caution" evidence="2">
    <conflict type="erroneous initiation">
        <sequence resource="EMBL-CDS" id="AAI03172"/>
    </conflict>
</comment>
<feature type="chain" id="PRO_0000307905" description="U11/U12 small nuclear ribonucleoprotein 25 kDa protein">
    <location>
        <begin position="1"/>
        <end position="123"/>
    </location>
</feature>
<feature type="domain" description="Ubiquitin-like">
    <location>
        <begin position="32"/>
        <end position="123"/>
    </location>
</feature>
<reference key="1">
    <citation type="submission" date="2005-08" db="EMBL/GenBank/DDBJ databases">
        <authorList>
            <consortium name="NIH - Mammalian Gene Collection (MGC) project"/>
        </authorList>
    </citation>
    <scope>NUCLEOTIDE SEQUENCE [LARGE SCALE MRNA]</scope>
    <source>
        <strain>Hereford</strain>
        <tissue>Hypothalamus</tissue>
    </source>
</reference>
<protein>
    <recommendedName>
        <fullName>U11/U12 small nuclear ribonucleoprotein 25 kDa protein</fullName>
        <shortName>U11/U12 snRNP 25 kDa protein</shortName>
    </recommendedName>
</protein>
<gene>
    <name type="primary">SNRNP25</name>
</gene>
<proteinExistence type="evidence at transcript level"/>